<protein>
    <recommendedName>
        <fullName evidence="1">Ribulose bisphosphate carboxylase large chain</fullName>
        <shortName evidence="1">RuBisCO large subunit</shortName>
        <ecNumber evidence="1">4.1.1.39</ecNumber>
    </recommendedName>
</protein>
<proteinExistence type="inferred from homology"/>
<organism>
    <name type="scientific">Synechococcus sp. (strain CC9311)</name>
    <dbReference type="NCBI Taxonomy" id="64471"/>
    <lineage>
        <taxon>Bacteria</taxon>
        <taxon>Bacillati</taxon>
        <taxon>Cyanobacteriota</taxon>
        <taxon>Cyanophyceae</taxon>
        <taxon>Synechococcales</taxon>
        <taxon>Synechococcaceae</taxon>
        <taxon>Synechococcus</taxon>
    </lineage>
</organism>
<feature type="chain" id="PRO_0000299975" description="Ribulose bisphosphate carboxylase large chain">
    <location>
        <begin position="1"/>
        <end position="470"/>
    </location>
</feature>
<feature type="active site" description="Proton acceptor" evidence="1">
    <location>
        <position position="167"/>
    </location>
</feature>
<feature type="active site" description="Proton acceptor" evidence="1">
    <location>
        <position position="286"/>
    </location>
</feature>
<feature type="binding site" description="in homodimeric partner" evidence="1">
    <location>
        <position position="115"/>
    </location>
    <ligand>
        <name>substrate</name>
    </ligand>
</feature>
<feature type="binding site" evidence="1">
    <location>
        <position position="165"/>
    </location>
    <ligand>
        <name>substrate</name>
    </ligand>
</feature>
<feature type="binding site" evidence="1">
    <location>
        <position position="169"/>
    </location>
    <ligand>
        <name>substrate</name>
    </ligand>
</feature>
<feature type="binding site" description="via carbamate group" evidence="1">
    <location>
        <position position="193"/>
    </location>
    <ligand>
        <name>Mg(2+)</name>
        <dbReference type="ChEBI" id="CHEBI:18420"/>
    </ligand>
</feature>
<feature type="binding site" evidence="1">
    <location>
        <position position="195"/>
    </location>
    <ligand>
        <name>Mg(2+)</name>
        <dbReference type="ChEBI" id="CHEBI:18420"/>
    </ligand>
</feature>
<feature type="binding site" evidence="1">
    <location>
        <position position="196"/>
    </location>
    <ligand>
        <name>Mg(2+)</name>
        <dbReference type="ChEBI" id="CHEBI:18420"/>
    </ligand>
</feature>
<feature type="binding site" evidence="1">
    <location>
        <position position="287"/>
    </location>
    <ligand>
        <name>substrate</name>
    </ligand>
</feature>
<feature type="binding site" evidence="1">
    <location>
        <position position="319"/>
    </location>
    <ligand>
        <name>substrate</name>
    </ligand>
</feature>
<feature type="binding site" evidence="1">
    <location>
        <position position="371"/>
    </location>
    <ligand>
        <name>substrate</name>
    </ligand>
</feature>
<feature type="site" description="Transition state stabilizer" evidence="1">
    <location>
        <position position="326"/>
    </location>
</feature>
<feature type="modified residue" description="N6-carboxylysine" evidence="1">
    <location>
        <position position="193"/>
    </location>
</feature>
<sequence length="470" mass="52583">MSKKYDAGVKEYRDTYWTPDYVPLDTDLLACFKCTGQEGVPKEEVAAAVAAESSTGTWSTVWSELLTDLDFYKGRCYRIEDVPGDKESFYAFIAYPLDLFEEGSITNVLTSLVGNVFGFKALRHLRLEDIRFPIAFIKCCAGPPNGIAVERDRMNKYGRPLLGCTIKPKLGLSGKNYGRVVYECLRGGLDFTKDDENINSQPFQRWQNRFEFVAEAIKLAEQETGERKGHYLNVTANTPEEMYERAEFAKELNQPIIMHDFITGGFTANTGLSKWCRKNGMLLHIHRAMHAVIDRHPKHGIHFRVLAKCLRLSGGDQLHTGTVVGKLEGDRQTTLGYIDQLRESFVPEDRSRGNFFDQDWGSMPGVFAVASGGIHVWHMPALVAIFGDDSVLQFGGGTHGHPWGSAAGAAANRVALEACVKARNAGREIEKESRDILMEAGKHSPELAIALETWKEIKFEFDTVDKLDVQ</sequence>
<gene>
    <name evidence="1" type="primary">cbbL</name>
    <name evidence="1" type="synonym">rbcL</name>
    <name type="ordered locus">sync_1967</name>
</gene>
<keyword id="KW-1283">Bacterial microcompartment</keyword>
<keyword id="KW-0113">Calvin cycle</keyword>
<keyword id="KW-0120">Carbon dioxide fixation</keyword>
<keyword id="KW-1282">Carboxysome</keyword>
<keyword id="KW-0456">Lyase</keyword>
<keyword id="KW-0460">Magnesium</keyword>
<keyword id="KW-0479">Metal-binding</keyword>
<keyword id="KW-0503">Monooxygenase</keyword>
<keyword id="KW-0560">Oxidoreductase</keyword>
<keyword id="KW-0601">Photorespiration</keyword>
<keyword id="KW-0602">Photosynthesis</keyword>
<keyword id="KW-1185">Reference proteome</keyword>
<evidence type="ECO:0000255" key="1">
    <source>
        <dbReference type="HAMAP-Rule" id="MF_01338"/>
    </source>
</evidence>
<dbReference type="EC" id="4.1.1.39" evidence="1"/>
<dbReference type="EMBL" id="CP000435">
    <property type="protein sequence ID" value="ABI45662.1"/>
    <property type="molecule type" value="Genomic_DNA"/>
</dbReference>
<dbReference type="RefSeq" id="WP_011619883.1">
    <property type="nucleotide sequence ID" value="NC_008319.1"/>
</dbReference>
<dbReference type="SMR" id="Q0I8Q2"/>
<dbReference type="STRING" id="64471.sync_1967"/>
<dbReference type="KEGG" id="syg:sync_1967"/>
<dbReference type="eggNOG" id="COG1850">
    <property type="taxonomic scope" value="Bacteria"/>
</dbReference>
<dbReference type="HOGENOM" id="CLU_031450_2_0_3"/>
<dbReference type="OrthoDB" id="9770811at2"/>
<dbReference type="Proteomes" id="UP000001961">
    <property type="component" value="Chromosome"/>
</dbReference>
<dbReference type="GO" id="GO:0031470">
    <property type="term" value="C:carboxysome"/>
    <property type="evidence" value="ECO:0007669"/>
    <property type="project" value="UniProtKB-SubCell"/>
</dbReference>
<dbReference type="GO" id="GO:0000287">
    <property type="term" value="F:magnesium ion binding"/>
    <property type="evidence" value="ECO:0007669"/>
    <property type="project" value="UniProtKB-UniRule"/>
</dbReference>
<dbReference type="GO" id="GO:0004497">
    <property type="term" value="F:monooxygenase activity"/>
    <property type="evidence" value="ECO:0007669"/>
    <property type="project" value="UniProtKB-KW"/>
</dbReference>
<dbReference type="GO" id="GO:0016984">
    <property type="term" value="F:ribulose-bisphosphate carboxylase activity"/>
    <property type="evidence" value="ECO:0007669"/>
    <property type="project" value="UniProtKB-UniRule"/>
</dbReference>
<dbReference type="GO" id="GO:0009853">
    <property type="term" value="P:photorespiration"/>
    <property type="evidence" value="ECO:0007669"/>
    <property type="project" value="UniProtKB-KW"/>
</dbReference>
<dbReference type="GO" id="GO:0019253">
    <property type="term" value="P:reductive pentose-phosphate cycle"/>
    <property type="evidence" value="ECO:0007669"/>
    <property type="project" value="UniProtKB-UniRule"/>
</dbReference>
<dbReference type="Gene3D" id="3.20.20.110">
    <property type="entry name" value="Ribulose bisphosphate carboxylase, large subunit, C-terminal domain"/>
    <property type="match status" value="1"/>
</dbReference>
<dbReference type="Gene3D" id="3.30.70.150">
    <property type="entry name" value="RuBisCO large subunit, N-terminal domain"/>
    <property type="match status" value="1"/>
</dbReference>
<dbReference type="HAMAP" id="MF_01338">
    <property type="entry name" value="RuBisCO_L_type1"/>
    <property type="match status" value="1"/>
</dbReference>
<dbReference type="InterPro" id="IPR033966">
    <property type="entry name" value="RuBisCO"/>
</dbReference>
<dbReference type="InterPro" id="IPR020878">
    <property type="entry name" value="RuBisCo_large_chain_AS"/>
</dbReference>
<dbReference type="InterPro" id="IPR000685">
    <property type="entry name" value="RuBisCO_lsu_C"/>
</dbReference>
<dbReference type="InterPro" id="IPR036376">
    <property type="entry name" value="RuBisCO_lsu_C_sf"/>
</dbReference>
<dbReference type="InterPro" id="IPR017443">
    <property type="entry name" value="RuBisCO_lsu_fd_N"/>
</dbReference>
<dbReference type="InterPro" id="IPR036422">
    <property type="entry name" value="RuBisCO_lsu_N_sf"/>
</dbReference>
<dbReference type="InterPro" id="IPR020888">
    <property type="entry name" value="RuBisCO_lsuI"/>
</dbReference>
<dbReference type="NCBIfam" id="NF003252">
    <property type="entry name" value="PRK04208.1"/>
    <property type="match status" value="1"/>
</dbReference>
<dbReference type="PANTHER" id="PTHR42704">
    <property type="entry name" value="RIBULOSE BISPHOSPHATE CARBOXYLASE"/>
    <property type="match status" value="1"/>
</dbReference>
<dbReference type="PANTHER" id="PTHR42704:SF17">
    <property type="entry name" value="RIBULOSE BISPHOSPHATE CARBOXYLASE LARGE CHAIN"/>
    <property type="match status" value="1"/>
</dbReference>
<dbReference type="Pfam" id="PF00016">
    <property type="entry name" value="RuBisCO_large"/>
    <property type="match status" value="1"/>
</dbReference>
<dbReference type="Pfam" id="PF02788">
    <property type="entry name" value="RuBisCO_large_N"/>
    <property type="match status" value="1"/>
</dbReference>
<dbReference type="SFLD" id="SFLDG01052">
    <property type="entry name" value="RuBisCO"/>
    <property type="match status" value="1"/>
</dbReference>
<dbReference type="SFLD" id="SFLDS00014">
    <property type="entry name" value="RuBisCO"/>
    <property type="match status" value="1"/>
</dbReference>
<dbReference type="SFLD" id="SFLDG00301">
    <property type="entry name" value="RuBisCO-like_proteins"/>
    <property type="match status" value="1"/>
</dbReference>
<dbReference type="SUPFAM" id="SSF51649">
    <property type="entry name" value="RuBisCo, C-terminal domain"/>
    <property type="match status" value="1"/>
</dbReference>
<dbReference type="SUPFAM" id="SSF54966">
    <property type="entry name" value="RuBisCO, large subunit, small (N-terminal) domain"/>
    <property type="match status" value="1"/>
</dbReference>
<dbReference type="PROSITE" id="PS00157">
    <property type="entry name" value="RUBISCO_LARGE"/>
    <property type="match status" value="1"/>
</dbReference>
<reference key="1">
    <citation type="journal article" date="2006" name="Proc. Natl. Acad. Sci. U.S.A.">
        <title>Genome sequence of Synechococcus CC9311: insights into adaptation to a coastal environment.</title>
        <authorList>
            <person name="Palenik B."/>
            <person name="Ren Q."/>
            <person name="Dupont C.L."/>
            <person name="Myers G.S."/>
            <person name="Heidelberg J.F."/>
            <person name="Badger J.H."/>
            <person name="Madupu R."/>
            <person name="Nelson W.C."/>
            <person name="Brinkac L.M."/>
            <person name="Dodson R.J."/>
            <person name="Durkin A.S."/>
            <person name="Daugherty S.C."/>
            <person name="Sullivan S.A."/>
            <person name="Khouri H."/>
            <person name="Mohamoud Y."/>
            <person name="Halpin R."/>
            <person name="Paulsen I.T."/>
        </authorList>
    </citation>
    <scope>NUCLEOTIDE SEQUENCE [LARGE SCALE GENOMIC DNA]</scope>
    <source>
        <strain>CC9311</strain>
    </source>
</reference>
<name>RBL_SYNS3</name>
<comment type="function">
    <text evidence="1">RuBisCO catalyzes two reactions: the carboxylation of D-ribulose 1,5-bisphosphate, the primary event in carbon dioxide fixation, as well as the oxidative fragmentation of the pentose substrate in the photorespiration process. Both reactions occur simultaneously and in competition at the same active site.</text>
</comment>
<comment type="catalytic activity">
    <reaction evidence="1">
        <text>2 (2R)-3-phosphoglycerate + 2 H(+) = D-ribulose 1,5-bisphosphate + CO2 + H2O</text>
        <dbReference type="Rhea" id="RHEA:23124"/>
        <dbReference type="ChEBI" id="CHEBI:15377"/>
        <dbReference type="ChEBI" id="CHEBI:15378"/>
        <dbReference type="ChEBI" id="CHEBI:16526"/>
        <dbReference type="ChEBI" id="CHEBI:57870"/>
        <dbReference type="ChEBI" id="CHEBI:58272"/>
        <dbReference type="EC" id="4.1.1.39"/>
    </reaction>
</comment>
<comment type="catalytic activity">
    <reaction evidence="1">
        <text>D-ribulose 1,5-bisphosphate + O2 = 2-phosphoglycolate + (2R)-3-phosphoglycerate + 2 H(+)</text>
        <dbReference type="Rhea" id="RHEA:36631"/>
        <dbReference type="ChEBI" id="CHEBI:15378"/>
        <dbReference type="ChEBI" id="CHEBI:15379"/>
        <dbReference type="ChEBI" id="CHEBI:57870"/>
        <dbReference type="ChEBI" id="CHEBI:58033"/>
        <dbReference type="ChEBI" id="CHEBI:58272"/>
    </reaction>
</comment>
<comment type="cofactor">
    <cofactor evidence="1">
        <name>Mg(2+)</name>
        <dbReference type="ChEBI" id="CHEBI:18420"/>
    </cofactor>
    <text evidence="1">Binds 1 Mg(2+) ion per subunit.</text>
</comment>
<comment type="subunit">
    <text evidence="1">Heterohexadecamer of 8 large chains and 8 small chains.</text>
</comment>
<comment type="subcellular location">
    <subcellularLocation>
        <location evidence="1">Carboxysome</location>
    </subcellularLocation>
</comment>
<comment type="miscellaneous">
    <text evidence="1">The basic functional RuBisCO is composed of a large chain homodimer in a 'head-to-tail' conformation. In form I RuBisCO this homodimer is arranged in a barrel-like tetramer with the small subunits forming a tetrameric 'cap' on each end of the 'barrel'.</text>
</comment>
<comment type="similarity">
    <text evidence="1">Belongs to the RuBisCO large chain family. Type I subfamily.</text>
</comment>
<accession>Q0I8Q2</accession>